<reference key="1">
    <citation type="journal article" date="2006" name="Appl. Environ. Microbiol.">
        <title>Genome sequence of the chemolithoautotrophic nitrite-oxidizing bacterium Nitrobacter winogradskyi Nb-255.</title>
        <authorList>
            <person name="Starkenburg S.R."/>
            <person name="Chain P.S.G."/>
            <person name="Sayavedra-Soto L.A."/>
            <person name="Hauser L."/>
            <person name="Land M.L."/>
            <person name="Larimer F.W."/>
            <person name="Malfatti S.A."/>
            <person name="Klotz M.G."/>
            <person name="Bottomley P.J."/>
            <person name="Arp D.J."/>
            <person name="Hickey W.J."/>
        </authorList>
    </citation>
    <scope>NUCLEOTIDE SEQUENCE [LARGE SCALE GENOMIC DNA]</scope>
    <source>
        <strain>ATCC 25391 / DSM 10237 / CIP 104748 / NCIMB 11846 / Nb-255</strain>
    </source>
</reference>
<comment type="function">
    <text evidence="1">Essential for recycling GMP and indirectly, cGMP.</text>
</comment>
<comment type="catalytic activity">
    <reaction evidence="1">
        <text>GMP + ATP = GDP + ADP</text>
        <dbReference type="Rhea" id="RHEA:20780"/>
        <dbReference type="ChEBI" id="CHEBI:30616"/>
        <dbReference type="ChEBI" id="CHEBI:58115"/>
        <dbReference type="ChEBI" id="CHEBI:58189"/>
        <dbReference type="ChEBI" id="CHEBI:456216"/>
        <dbReference type="EC" id="2.7.4.8"/>
    </reaction>
</comment>
<comment type="subcellular location">
    <subcellularLocation>
        <location evidence="1">Cytoplasm</location>
    </subcellularLocation>
</comment>
<comment type="similarity">
    <text evidence="1">Belongs to the guanylate kinase family.</text>
</comment>
<keyword id="KW-0067">ATP-binding</keyword>
<keyword id="KW-0963">Cytoplasm</keyword>
<keyword id="KW-0418">Kinase</keyword>
<keyword id="KW-0547">Nucleotide-binding</keyword>
<keyword id="KW-1185">Reference proteome</keyword>
<keyword id="KW-0808">Transferase</keyword>
<feature type="chain" id="PRO_0000266359" description="Guanylate kinase">
    <location>
        <begin position="1"/>
        <end position="219"/>
    </location>
</feature>
<feature type="domain" description="Guanylate kinase-like" evidence="1">
    <location>
        <begin position="15"/>
        <end position="194"/>
    </location>
</feature>
<feature type="binding site" evidence="1">
    <location>
        <begin position="22"/>
        <end position="29"/>
    </location>
    <ligand>
        <name>ATP</name>
        <dbReference type="ChEBI" id="CHEBI:30616"/>
    </ligand>
</feature>
<protein>
    <recommendedName>
        <fullName evidence="1">Guanylate kinase</fullName>
        <ecNumber evidence="1">2.7.4.8</ecNumber>
    </recommendedName>
    <alternativeName>
        <fullName evidence="1">GMP kinase</fullName>
    </alternativeName>
</protein>
<proteinExistence type="inferred from homology"/>
<evidence type="ECO:0000255" key="1">
    <source>
        <dbReference type="HAMAP-Rule" id="MF_00328"/>
    </source>
</evidence>
<organism>
    <name type="scientific">Nitrobacter winogradskyi (strain ATCC 25391 / DSM 10237 / CIP 104748 / NCIMB 11846 / Nb-255)</name>
    <dbReference type="NCBI Taxonomy" id="323098"/>
    <lineage>
        <taxon>Bacteria</taxon>
        <taxon>Pseudomonadati</taxon>
        <taxon>Pseudomonadota</taxon>
        <taxon>Alphaproteobacteria</taxon>
        <taxon>Hyphomicrobiales</taxon>
        <taxon>Nitrobacteraceae</taxon>
        <taxon>Nitrobacter</taxon>
    </lineage>
</organism>
<name>KGUA_NITWN</name>
<dbReference type="EC" id="2.7.4.8" evidence="1"/>
<dbReference type="EMBL" id="CP000115">
    <property type="protein sequence ID" value="ABA04944.1"/>
    <property type="molecule type" value="Genomic_DNA"/>
</dbReference>
<dbReference type="RefSeq" id="WP_011314943.1">
    <property type="nucleotide sequence ID" value="NC_007406.1"/>
</dbReference>
<dbReference type="SMR" id="Q3SRZ7"/>
<dbReference type="STRING" id="323098.Nwi_1683"/>
<dbReference type="KEGG" id="nwi:Nwi_1683"/>
<dbReference type="eggNOG" id="COG0194">
    <property type="taxonomic scope" value="Bacteria"/>
</dbReference>
<dbReference type="HOGENOM" id="CLU_001715_1_0_5"/>
<dbReference type="OrthoDB" id="9808150at2"/>
<dbReference type="Proteomes" id="UP000002531">
    <property type="component" value="Chromosome"/>
</dbReference>
<dbReference type="GO" id="GO:0005829">
    <property type="term" value="C:cytosol"/>
    <property type="evidence" value="ECO:0007669"/>
    <property type="project" value="TreeGrafter"/>
</dbReference>
<dbReference type="GO" id="GO:0005524">
    <property type="term" value="F:ATP binding"/>
    <property type="evidence" value="ECO:0007669"/>
    <property type="project" value="UniProtKB-UniRule"/>
</dbReference>
<dbReference type="GO" id="GO:0004385">
    <property type="term" value="F:guanylate kinase activity"/>
    <property type="evidence" value="ECO:0007669"/>
    <property type="project" value="UniProtKB-UniRule"/>
</dbReference>
<dbReference type="CDD" id="cd00071">
    <property type="entry name" value="GMPK"/>
    <property type="match status" value="1"/>
</dbReference>
<dbReference type="FunFam" id="3.30.63.10:FF:000002">
    <property type="entry name" value="Guanylate kinase 1"/>
    <property type="match status" value="1"/>
</dbReference>
<dbReference type="Gene3D" id="3.30.63.10">
    <property type="entry name" value="Guanylate Kinase phosphate binding domain"/>
    <property type="match status" value="1"/>
</dbReference>
<dbReference type="Gene3D" id="3.40.50.300">
    <property type="entry name" value="P-loop containing nucleotide triphosphate hydrolases"/>
    <property type="match status" value="1"/>
</dbReference>
<dbReference type="HAMAP" id="MF_00328">
    <property type="entry name" value="Guanylate_kinase"/>
    <property type="match status" value="1"/>
</dbReference>
<dbReference type="InterPro" id="IPR008145">
    <property type="entry name" value="GK/Ca_channel_bsu"/>
</dbReference>
<dbReference type="InterPro" id="IPR008144">
    <property type="entry name" value="Guanylate_kin-like_dom"/>
</dbReference>
<dbReference type="InterPro" id="IPR017665">
    <property type="entry name" value="Guanylate_kinase"/>
</dbReference>
<dbReference type="InterPro" id="IPR020590">
    <property type="entry name" value="Guanylate_kinase_CS"/>
</dbReference>
<dbReference type="InterPro" id="IPR027417">
    <property type="entry name" value="P-loop_NTPase"/>
</dbReference>
<dbReference type="NCBIfam" id="TIGR03263">
    <property type="entry name" value="guanyl_kin"/>
    <property type="match status" value="1"/>
</dbReference>
<dbReference type="PANTHER" id="PTHR23117:SF13">
    <property type="entry name" value="GUANYLATE KINASE"/>
    <property type="match status" value="1"/>
</dbReference>
<dbReference type="PANTHER" id="PTHR23117">
    <property type="entry name" value="GUANYLATE KINASE-RELATED"/>
    <property type="match status" value="1"/>
</dbReference>
<dbReference type="Pfam" id="PF00625">
    <property type="entry name" value="Guanylate_kin"/>
    <property type="match status" value="1"/>
</dbReference>
<dbReference type="SMART" id="SM00072">
    <property type="entry name" value="GuKc"/>
    <property type="match status" value="1"/>
</dbReference>
<dbReference type="SUPFAM" id="SSF52540">
    <property type="entry name" value="P-loop containing nucleoside triphosphate hydrolases"/>
    <property type="match status" value="1"/>
</dbReference>
<dbReference type="PROSITE" id="PS00856">
    <property type="entry name" value="GUANYLATE_KINASE_1"/>
    <property type="match status" value="1"/>
</dbReference>
<dbReference type="PROSITE" id="PS50052">
    <property type="entry name" value="GUANYLATE_KINASE_2"/>
    <property type="match status" value="1"/>
</dbReference>
<sequence length="219" mass="24913">MTAHDRGFDGVERRGLMFVLSSPSGAGKTTLSRLLIERVEGLSLSVSATTRPMRPGEVDGRDYAFVDEKTFAAMVERNDLLEWAHVFDNHYGTPRAPVDAALSSGRDVLFDIDWQGTQQLREKARDDVVSVFILPPSAADLERRLHTRAQDSDDVIRERMARAAHEVSHWAEYDYIVINRDIDEAFAEVQSILKAERLKRERRTGLTAFVRELQRQLET</sequence>
<accession>Q3SRZ7</accession>
<gene>
    <name evidence="1" type="primary">gmk</name>
    <name type="ordered locus">Nwi_1683</name>
</gene>